<organism>
    <name type="scientific">Photorhabdus laumondii subsp. laumondii (strain DSM 15139 / CIP 105565 / TT01)</name>
    <name type="common">Photorhabdus luminescens subsp. laumondii</name>
    <dbReference type="NCBI Taxonomy" id="243265"/>
    <lineage>
        <taxon>Bacteria</taxon>
        <taxon>Pseudomonadati</taxon>
        <taxon>Pseudomonadota</taxon>
        <taxon>Gammaproteobacteria</taxon>
        <taxon>Enterobacterales</taxon>
        <taxon>Morganellaceae</taxon>
        <taxon>Photorhabdus</taxon>
    </lineage>
</organism>
<gene>
    <name evidence="1" type="primary">cobD</name>
    <name type="ordered locus">plu2998</name>
</gene>
<evidence type="ECO:0000255" key="1">
    <source>
        <dbReference type="HAMAP-Rule" id="MF_00024"/>
    </source>
</evidence>
<feature type="chain" id="PRO_1000057215" description="Cobalamin biosynthesis protein CobD">
    <location>
        <begin position="1"/>
        <end position="319"/>
    </location>
</feature>
<feature type="transmembrane region" description="Helical" evidence="1">
    <location>
        <begin position="56"/>
        <end position="76"/>
    </location>
</feature>
<feature type="transmembrane region" description="Helical" evidence="1">
    <location>
        <begin position="153"/>
        <end position="173"/>
    </location>
</feature>
<feature type="transmembrane region" description="Helical" evidence="1">
    <location>
        <begin position="204"/>
        <end position="224"/>
    </location>
</feature>
<feature type="transmembrane region" description="Helical" evidence="1">
    <location>
        <begin position="290"/>
        <end position="310"/>
    </location>
</feature>
<proteinExistence type="inferred from homology"/>
<keyword id="KW-1003">Cell membrane</keyword>
<keyword id="KW-0169">Cobalamin biosynthesis</keyword>
<keyword id="KW-0472">Membrane</keyword>
<keyword id="KW-1185">Reference proteome</keyword>
<keyword id="KW-0812">Transmembrane</keyword>
<keyword id="KW-1133">Transmembrane helix</keyword>
<comment type="function">
    <text evidence="1">Converts cobyric acid to cobinamide by the addition of aminopropanol on the F carboxylic group.</text>
</comment>
<comment type="pathway">
    <text evidence="1">Cofactor biosynthesis; adenosylcobalamin biosynthesis.</text>
</comment>
<comment type="subcellular location">
    <subcellularLocation>
        <location evidence="1">Cell membrane</location>
        <topology evidence="1">Multi-pass membrane protein</topology>
    </subcellularLocation>
</comment>
<comment type="similarity">
    <text evidence="1">Belongs to the CobD/CbiB family.</text>
</comment>
<name>COBD_PHOLL</name>
<reference key="1">
    <citation type="journal article" date="2003" name="Nat. Biotechnol.">
        <title>The genome sequence of the entomopathogenic bacterium Photorhabdus luminescens.</title>
        <authorList>
            <person name="Duchaud E."/>
            <person name="Rusniok C."/>
            <person name="Frangeul L."/>
            <person name="Buchrieser C."/>
            <person name="Givaudan A."/>
            <person name="Taourit S."/>
            <person name="Bocs S."/>
            <person name="Boursaux-Eude C."/>
            <person name="Chandler M."/>
            <person name="Charles J.-F."/>
            <person name="Dassa E."/>
            <person name="Derose R."/>
            <person name="Derzelle S."/>
            <person name="Freyssinet G."/>
            <person name="Gaudriault S."/>
            <person name="Medigue C."/>
            <person name="Lanois A."/>
            <person name="Powell K."/>
            <person name="Siguier P."/>
            <person name="Vincent R."/>
            <person name="Wingate V."/>
            <person name="Zouine M."/>
            <person name="Glaser P."/>
            <person name="Boemare N."/>
            <person name="Danchin A."/>
            <person name="Kunst F."/>
        </authorList>
    </citation>
    <scope>NUCLEOTIDE SEQUENCE [LARGE SCALE GENOMIC DNA]</scope>
    <source>
        <strain>DSM 15139 / CIP 105565 / TT01</strain>
    </source>
</reference>
<dbReference type="EMBL" id="BX571869">
    <property type="protein sequence ID" value="CAE15372.1"/>
    <property type="molecule type" value="Genomic_DNA"/>
</dbReference>
<dbReference type="RefSeq" id="WP_011147217.1">
    <property type="nucleotide sequence ID" value="NC_005126.1"/>
</dbReference>
<dbReference type="STRING" id="243265.plu2998"/>
<dbReference type="GeneID" id="48849257"/>
<dbReference type="KEGG" id="plu:plu2998"/>
<dbReference type="eggNOG" id="COG1270">
    <property type="taxonomic scope" value="Bacteria"/>
</dbReference>
<dbReference type="HOGENOM" id="CLU_054212_0_0_6"/>
<dbReference type="OrthoDB" id="9811967at2"/>
<dbReference type="UniPathway" id="UPA00148"/>
<dbReference type="Proteomes" id="UP000002514">
    <property type="component" value="Chromosome"/>
</dbReference>
<dbReference type="GO" id="GO:0005886">
    <property type="term" value="C:plasma membrane"/>
    <property type="evidence" value="ECO:0007669"/>
    <property type="project" value="UniProtKB-SubCell"/>
</dbReference>
<dbReference type="GO" id="GO:0015420">
    <property type="term" value="F:ABC-type vitamin B12 transporter activity"/>
    <property type="evidence" value="ECO:0007669"/>
    <property type="project" value="UniProtKB-UniRule"/>
</dbReference>
<dbReference type="GO" id="GO:0048472">
    <property type="term" value="F:threonine-phosphate decarboxylase activity"/>
    <property type="evidence" value="ECO:0007669"/>
    <property type="project" value="InterPro"/>
</dbReference>
<dbReference type="GO" id="GO:0009236">
    <property type="term" value="P:cobalamin biosynthetic process"/>
    <property type="evidence" value="ECO:0007669"/>
    <property type="project" value="UniProtKB-UniRule"/>
</dbReference>
<dbReference type="HAMAP" id="MF_00024">
    <property type="entry name" value="CobD_CbiB"/>
    <property type="match status" value="1"/>
</dbReference>
<dbReference type="InterPro" id="IPR004485">
    <property type="entry name" value="Cobalamin_biosynth_CobD/CbiB"/>
</dbReference>
<dbReference type="NCBIfam" id="TIGR00380">
    <property type="entry name" value="cobal_cbiB"/>
    <property type="match status" value="1"/>
</dbReference>
<dbReference type="PANTHER" id="PTHR34308">
    <property type="entry name" value="COBALAMIN BIOSYNTHESIS PROTEIN CBIB"/>
    <property type="match status" value="1"/>
</dbReference>
<dbReference type="PANTHER" id="PTHR34308:SF1">
    <property type="entry name" value="COBALAMIN BIOSYNTHESIS PROTEIN CBIB"/>
    <property type="match status" value="1"/>
</dbReference>
<dbReference type="Pfam" id="PF03186">
    <property type="entry name" value="CobD_Cbib"/>
    <property type="match status" value="1"/>
</dbReference>
<accession>Q7N2S6</accession>
<protein>
    <recommendedName>
        <fullName evidence="1">Cobalamin biosynthesis protein CobD</fullName>
    </recommendedName>
</protein>
<sequence length="319" mass="35726">MTLAAWFAAFLLDSWLGDPPHWPHPVRWIGKLISLVQRAVRRCCHSERALKVGGAGLWIVVVGLTWLVSWGCLWLMNAIHPWVGWLVEVWMIYTLLAGRCLSDTALEVHGVLQQGLLDESRQQLSWIVGRDTSQLDAPQITRAVVETVAENSVDGVIAPLFFLMIGGAPLAMAYKAINTLDSMVGYKTQEYHAIGYVSARMDDLANWLPARLSWLLLSAAAWFIRLDFRQALRIGWRDRYQHTSPNCGWSEATVAGALGIRLGGPSCYFGERVEKPWMGDERRKIALTDIPLSIYLMMIASQLALLLFALLRLLLVGMA</sequence>